<protein>
    <recommendedName>
        <fullName>Probable cytochrome P450 CYP36A1</fullName>
        <ecNumber>1.14.-.-</ecNumber>
    </recommendedName>
</protein>
<feature type="chain" id="PRO_0000052270" description="Probable cytochrome P450 CYP36A1">
    <location>
        <begin position="1"/>
        <end position="493"/>
    </location>
</feature>
<feature type="transmembrane region" description="Helical" evidence="2">
    <location>
        <begin position="1"/>
        <end position="21"/>
    </location>
</feature>
<feature type="transmembrane region" description="Helical" evidence="2">
    <location>
        <begin position="60"/>
        <end position="80"/>
    </location>
</feature>
<feature type="transmembrane region" description="Helical" evidence="2">
    <location>
        <begin position="290"/>
        <end position="310"/>
    </location>
</feature>
<feature type="binding site" description="axial binding residue" evidence="1">
    <location>
        <position position="440"/>
    </location>
    <ligand>
        <name>heme</name>
        <dbReference type="ChEBI" id="CHEBI:30413"/>
    </ligand>
    <ligandPart>
        <name>Fe</name>
        <dbReference type="ChEBI" id="CHEBI:18248"/>
    </ligandPart>
</feature>
<name>C36A1_CAEEL</name>
<gene>
    <name type="primary">cyp-36A1</name>
    <name type="synonym">cyp36a1</name>
    <name type="ORF">C34B7.3</name>
</gene>
<keyword id="KW-0349">Heme</keyword>
<keyword id="KW-0408">Iron</keyword>
<keyword id="KW-0472">Membrane</keyword>
<keyword id="KW-0479">Metal-binding</keyword>
<keyword id="KW-0503">Monooxygenase</keyword>
<keyword id="KW-0560">Oxidoreductase</keyword>
<keyword id="KW-1185">Reference proteome</keyword>
<keyword id="KW-0812">Transmembrane</keyword>
<keyword id="KW-1133">Transmembrane helix</keyword>
<sequence>MLFAQLVILVIIVMLFLCRFANKLRGLPPGPTPWPFIGNTFQVPEDRIDLIINEFKKKYGGIFTLWLPFPTIVICDYDMLKRNIVKNGESFSGRPDTFIMDMLVQGNYGLFFMENNWWKAQRRFTTHIFRSLGVGQAGTQDTIASLASGLVEKIDGQKDKPIELRPLLVHVVGNVIHKHLFGFTREWNETEILDFHVAINDVLEHFTSPKTQLLDAWPWLAYLDKPLSLGIPRTTRANDAIIQNLEQALAKHKTGINYDEEPSSYMDAFLKEMKIRAAENALEDGFTEKQLIVAIYDLYSAGMETIIIVLRFAFLYLVNNPETQKRIHEELDRNVGRERQVVMDDQKHLPYTCAFLQEVYRLGYVLPVNFLRCTLTDVEDCEGYRLNAGTRVIAQFQSVHVDKKHFPDPEHFNPDRFLNSRGEYIRDDRVNPFSMGKRSCLGENLARMEVFLYFCTLMQNFEWHTDGPYAPPIDVITSSLRAPKPFTVRASRR</sequence>
<organism>
    <name type="scientific">Caenorhabditis elegans</name>
    <dbReference type="NCBI Taxonomy" id="6239"/>
    <lineage>
        <taxon>Eukaryota</taxon>
        <taxon>Metazoa</taxon>
        <taxon>Ecdysozoa</taxon>
        <taxon>Nematoda</taxon>
        <taxon>Chromadorea</taxon>
        <taxon>Rhabditida</taxon>
        <taxon>Rhabditina</taxon>
        <taxon>Rhabditomorpha</taxon>
        <taxon>Rhabditoidea</taxon>
        <taxon>Rhabditidae</taxon>
        <taxon>Peloderinae</taxon>
        <taxon>Caenorhabditis</taxon>
    </lineage>
</organism>
<comment type="function">
    <text>Cytochromes P450 are a group of heme-thiolate monooxygenases. They oxidize a variety of structurally unrelated compounds, including steroids, fatty acids, and xenobiotics.</text>
</comment>
<comment type="cofactor">
    <cofactor evidence="1">
        <name>heme</name>
        <dbReference type="ChEBI" id="CHEBI:30413"/>
    </cofactor>
</comment>
<comment type="subcellular location">
    <subcellularLocation>
        <location evidence="3">Membrane</location>
        <topology evidence="3">Multi-pass membrane protein</topology>
    </subcellularLocation>
</comment>
<comment type="similarity">
    <text evidence="3">Belongs to the cytochrome P450 family.</text>
</comment>
<reference key="1">
    <citation type="journal article" date="1998" name="Science">
        <title>Genome sequence of the nematode C. elegans: a platform for investigating biology.</title>
        <authorList>
            <consortium name="The C. elegans sequencing consortium"/>
        </authorList>
    </citation>
    <scope>NUCLEOTIDE SEQUENCE [LARGE SCALE GENOMIC DNA]</scope>
    <source>
        <strain>Bristol N2</strain>
    </source>
</reference>
<proteinExistence type="inferred from homology"/>
<accession>P90771</accession>
<accession>O02645</accession>
<evidence type="ECO:0000250" key="1"/>
<evidence type="ECO:0000255" key="2"/>
<evidence type="ECO:0000305" key="3"/>
<dbReference type="EC" id="1.14.-.-"/>
<dbReference type="EMBL" id="Z83220">
    <property type="protein sequence ID" value="CAB05702.1"/>
    <property type="molecule type" value="Genomic_DNA"/>
</dbReference>
<dbReference type="PIR" id="T19695">
    <property type="entry name" value="T19695"/>
</dbReference>
<dbReference type="RefSeq" id="NP_492267.1">
    <property type="nucleotide sequence ID" value="NM_059866.7"/>
</dbReference>
<dbReference type="SMR" id="P90771"/>
<dbReference type="BioGRID" id="48024">
    <property type="interactions" value="1"/>
</dbReference>
<dbReference type="DIP" id="DIP-25137N"/>
<dbReference type="FunCoup" id="P90771">
    <property type="interactions" value="9"/>
</dbReference>
<dbReference type="IntAct" id="P90771">
    <property type="interactions" value="1"/>
</dbReference>
<dbReference type="STRING" id="6239.C34B7.3.1"/>
<dbReference type="PaxDb" id="6239-C34B7.3"/>
<dbReference type="EnsemblMetazoa" id="C34B7.3.1">
    <property type="protein sequence ID" value="C34B7.3.1"/>
    <property type="gene ID" value="WBGene00007913"/>
</dbReference>
<dbReference type="GeneID" id="183193"/>
<dbReference type="KEGG" id="cel:CELE_C34B7.3"/>
<dbReference type="UCSC" id="C34B7.3">
    <property type="organism name" value="c. elegans"/>
</dbReference>
<dbReference type="AGR" id="WB:WBGene00007913"/>
<dbReference type="CTD" id="183193"/>
<dbReference type="WormBase" id="C34B7.3">
    <property type="protein sequence ID" value="CE08567"/>
    <property type="gene ID" value="WBGene00007913"/>
    <property type="gene designation" value="cyp-36A1"/>
</dbReference>
<dbReference type="eggNOG" id="KOG0156">
    <property type="taxonomic scope" value="Eukaryota"/>
</dbReference>
<dbReference type="HOGENOM" id="CLU_001570_22_3_1"/>
<dbReference type="InParanoid" id="P90771"/>
<dbReference type="OMA" id="RFTTHIF"/>
<dbReference type="OrthoDB" id="5836879at2759"/>
<dbReference type="PhylomeDB" id="P90771"/>
<dbReference type="Reactome" id="R-CEL-211935">
    <property type="pathway name" value="Fatty acids"/>
</dbReference>
<dbReference type="Reactome" id="R-CEL-211945">
    <property type="pathway name" value="Phase I - Functionalization of compounds"/>
</dbReference>
<dbReference type="Reactome" id="R-CEL-211958">
    <property type="pathway name" value="Miscellaneous substrates"/>
</dbReference>
<dbReference type="Reactome" id="R-CEL-211981">
    <property type="pathway name" value="Xenobiotics"/>
</dbReference>
<dbReference type="Reactome" id="R-CEL-211999">
    <property type="pathway name" value="CYP2E1 reactions"/>
</dbReference>
<dbReference type="Reactome" id="R-CEL-2142670">
    <property type="pathway name" value="Synthesis of epoxy (EET) and dihydroxyeicosatrienoic acids (DHET)"/>
</dbReference>
<dbReference type="Reactome" id="R-CEL-2142816">
    <property type="pathway name" value="Synthesis of (16-20)-hydroxyeicosatetraenoic acids (HETE)"/>
</dbReference>
<dbReference type="Reactome" id="R-CEL-5423646">
    <property type="pathway name" value="Aflatoxin activation and detoxification"/>
</dbReference>
<dbReference type="Reactome" id="R-CEL-9027307">
    <property type="pathway name" value="Biosynthesis of maresin-like SPMs"/>
</dbReference>
<dbReference type="Reactome" id="R-CEL-9749641">
    <property type="pathway name" value="Aspirin ADME"/>
</dbReference>
<dbReference type="Reactome" id="R-CEL-9753281">
    <property type="pathway name" value="Paracetamol ADME"/>
</dbReference>
<dbReference type="PRO" id="PR:P90771"/>
<dbReference type="Proteomes" id="UP000001940">
    <property type="component" value="Chromosome I"/>
</dbReference>
<dbReference type="Bgee" id="WBGene00007913">
    <property type="expression patterns" value="Expressed in larva and 1 other cell type or tissue"/>
</dbReference>
<dbReference type="GO" id="GO:0005737">
    <property type="term" value="C:cytoplasm"/>
    <property type="evidence" value="ECO:0000318"/>
    <property type="project" value="GO_Central"/>
</dbReference>
<dbReference type="GO" id="GO:0043231">
    <property type="term" value="C:intracellular membrane-bounded organelle"/>
    <property type="evidence" value="ECO:0000318"/>
    <property type="project" value="GO_Central"/>
</dbReference>
<dbReference type="GO" id="GO:0016020">
    <property type="term" value="C:membrane"/>
    <property type="evidence" value="ECO:0007669"/>
    <property type="project" value="UniProtKB-SubCell"/>
</dbReference>
<dbReference type="GO" id="GO:0020037">
    <property type="term" value="F:heme binding"/>
    <property type="evidence" value="ECO:0000318"/>
    <property type="project" value="GO_Central"/>
</dbReference>
<dbReference type="GO" id="GO:0005506">
    <property type="term" value="F:iron ion binding"/>
    <property type="evidence" value="ECO:0007669"/>
    <property type="project" value="InterPro"/>
</dbReference>
<dbReference type="GO" id="GO:0016712">
    <property type="term" value="F:oxidoreductase activity, acting on paired donors, with incorporation or reduction of molecular oxygen, reduced flavin or flavoprotein as one donor, and incorporation of one atom of oxygen"/>
    <property type="evidence" value="ECO:0000318"/>
    <property type="project" value="GO_Central"/>
</dbReference>
<dbReference type="GO" id="GO:0006082">
    <property type="term" value="P:organic acid metabolic process"/>
    <property type="evidence" value="ECO:0000318"/>
    <property type="project" value="GO_Central"/>
</dbReference>
<dbReference type="GO" id="GO:0006805">
    <property type="term" value="P:xenobiotic metabolic process"/>
    <property type="evidence" value="ECO:0000318"/>
    <property type="project" value="GO_Central"/>
</dbReference>
<dbReference type="CDD" id="cd20617">
    <property type="entry name" value="CYP1_2-like"/>
    <property type="match status" value="1"/>
</dbReference>
<dbReference type="FunFam" id="1.10.630.10:FF:000125">
    <property type="entry name" value="Probable cytochrome P450 CYP36A1"/>
    <property type="match status" value="1"/>
</dbReference>
<dbReference type="Gene3D" id="1.10.630.10">
    <property type="entry name" value="Cytochrome P450"/>
    <property type="match status" value="1"/>
</dbReference>
<dbReference type="InterPro" id="IPR001128">
    <property type="entry name" value="Cyt_P450"/>
</dbReference>
<dbReference type="InterPro" id="IPR017972">
    <property type="entry name" value="Cyt_P450_CS"/>
</dbReference>
<dbReference type="InterPro" id="IPR002401">
    <property type="entry name" value="Cyt_P450_E_grp-I"/>
</dbReference>
<dbReference type="InterPro" id="IPR036396">
    <property type="entry name" value="Cyt_P450_sf"/>
</dbReference>
<dbReference type="InterPro" id="IPR050182">
    <property type="entry name" value="Cytochrome_P450_fam2"/>
</dbReference>
<dbReference type="PANTHER" id="PTHR24300">
    <property type="entry name" value="CYTOCHROME P450 508A4-RELATED"/>
    <property type="match status" value="1"/>
</dbReference>
<dbReference type="PANTHER" id="PTHR24300:SF338">
    <property type="entry name" value="CYTOCHROME P450 CYP36A1-RELATED"/>
    <property type="match status" value="1"/>
</dbReference>
<dbReference type="Pfam" id="PF00067">
    <property type="entry name" value="p450"/>
    <property type="match status" value="1"/>
</dbReference>
<dbReference type="PRINTS" id="PR00463">
    <property type="entry name" value="EP450I"/>
</dbReference>
<dbReference type="PRINTS" id="PR00385">
    <property type="entry name" value="P450"/>
</dbReference>
<dbReference type="SUPFAM" id="SSF48264">
    <property type="entry name" value="Cytochrome P450"/>
    <property type="match status" value="1"/>
</dbReference>
<dbReference type="PROSITE" id="PS00086">
    <property type="entry name" value="CYTOCHROME_P450"/>
    <property type="match status" value="1"/>
</dbReference>